<keyword id="KW-0067">ATP-binding</keyword>
<keyword id="KW-0963">Cytoplasm</keyword>
<keyword id="KW-0520">NAD</keyword>
<keyword id="KW-0547">Nucleotide-binding</keyword>
<keyword id="KW-0548">Nucleotidyltransferase</keyword>
<keyword id="KW-0662">Pyridine nucleotide biosynthesis</keyword>
<keyword id="KW-1185">Reference proteome</keyword>
<keyword id="KW-0808">Transferase</keyword>
<reference key="1">
    <citation type="journal article" date="2009" name="Appl. Environ. Microbiol.">
        <title>Metabolic versatility and indigenous origin of the archaeon Thermococcus sibiricus, isolated from a siberian oil reservoir, as revealed by genome analysis.</title>
        <authorList>
            <person name="Mardanov A.V."/>
            <person name="Ravin N.V."/>
            <person name="Svetlitchnyi V.A."/>
            <person name="Beletsky A.V."/>
            <person name="Miroshnichenko M.L."/>
            <person name="Bonch-Osmolovskaya E.A."/>
            <person name="Skryabin K.G."/>
        </authorList>
    </citation>
    <scope>NUCLEOTIDE SEQUENCE [LARGE SCALE GENOMIC DNA]</scope>
    <source>
        <strain>DSM 12597 / MM 739</strain>
    </source>
</reference>
<gene>
    <name type="ordered locus">TSIB_1082</name>
</gene>
<comment type="catalytic activity">
    <reaction evidence="1">
        <text>beta-nicotinamide D-ribonucleotide + ATP + H(+) = diphosphate + NAD(+)</text>
        <dbReference type="Rhea" id="RHEA:21360"/>
        <dbReference type="ChEBI" id="CHEBI:14649"/>
        <dbReference type="ChEBI" id="CHEBI:15378"/>
        <dbReference type="ChEBI" id="CHEBI:30616"/>
        <dbReference type="ChEBI" id="CHEBI:33019"/>
        <dbReference type="ChEBI" id="CHEBI:57540"/>
        <dbReference type="EC" id="2.7.7.1"/>
    </reaction>
</comment>
<comment type="pathway">
    <text evidence="1">Cofactor biosynthesis; NAD(+) biosynthesis; NAD(+) from nicotinamide D-ribonucleotide: step 1/1.</text>
</comment>
<comment type="subcellular location">
    <subcellularLocation>
        <location evidence="1">Cytoplasm</location>
    </subcellularLocation>
</comment>
<comment type="similarity">
    <text evidence="1">Belongs to the archaeal NMN adenylyltransferase family.</text>
</comment>
<feature type="chain" id="PRO_1000204480" description="Nicotinamide-nucleotide adenylyltransferase">
    <location>
        <begin position="1"/>
        <end position="186"/>
    </location>
</feature>
<accession>C6A3E1</accession>
<proteinExistence type="inferred from homology"/>
<sequence>MRGLFVGRFQPVHNGHLKALEYVFEEVEEVIIGIGSAQVSHTLKNPFTTSERMEMLIRALDEKGIPRGKYFLVALPDINFNSIWAPYVEAIVPKFDIVFTGNSLVAQLFRERGYKVIVQPMFRKDILSATEIRRRMIEDQTWEELVPKSVVEYIKEIKGVERIKMLATDLEKNEKELQTPLRIPEF</sequence>
<dbReference type="EC" id="2.7.7.1" evidence="1"/>
<dbReference type="EMBL" id="CP001463">
    <property type="protein sequence ID" value="ACS90136.1"/>
    <property type="molecule type" value="Genomic_DNA"/>
</dbReference>
<dbReference type="RefSeq" id="WP_015849355.1">
    <property type="nucleotide sequence ID" value="NC_012883.1"/>
</dbReference>
<dbReference type="SMR" id="C6A3E1"/>
<dbReference type="STRING" id="604354.TSIB_1082"/>
<dbReference type="GeneID" id="8096079"/>
<dbReference type="KEGG" id="tsi:TSIB_1082"/>
<dbReference type="eggNOG" id="arCOG00972">
    <property type="taxonomic scope" value="Archaea"/>
</dbReference>
<dbReference type="HOGENOM" id="CLU_108783_0_0_2"/>
<dbReference type="OrthoDB" id="264480at2157"/>
<dbReference type="UniPathway" id="UPA00253">
    <property type="reaction ID" value="UER00600"/>
</dbReference>
<dbReference type="Proteomes" id="UP000009079">
    <property type="component" value="Chromosome"/>
</dbReference>
<dbReference type="GO" id="GO:0005737">
    <property type="term" value="C:cytoplasm"/>
    <property type="evidence" value="ECO:0007669"/>
    <property type="project" value="UniProtKB-SubCell"/>
</dbReference>
<dbReference type="GO" id="GO:0005524">
    <property type="term" value="F:ATP binding"/>
    <property type="evidence" value="ECO:0007669"/>
    <property type="project" value="UniProtKB-KW"/>
</dbReference>
<dbReference type="GO" id="GO:0000309">
    <property type="term" value="F:nicotinamide-nucleotide adenylyltransferase activity"/>
    <property type="evidence" value="ECO:0007669"/>
    <property type="project" value="UniProtKB-UniRule"/>
</dbReference>
<dbReference type="GO" id="GO:0009435">
    <property type="term" value="P:NAD biosynthetic process"/>
    <property type="evidence" value="ECO:0007669"/>
    <property type="project" value="UniProtKB-UniRule"/>
</dbReference>
<dbReference type="Gene3D" id="3.40.50.620">
    <property type="entry name" value="HUPs"/>
    <property type="match status" value="1"/>
</dbReference>
<dbReference type="HAMAP" id="MF_00243">
    <property type="entry name" value="NMN_adenylyltr"/>
    <property type="match status" value="1"/>
</dbReference>
<dbReference type="InterPro" id="IPR004821">
    <property type="entry name" value="Cyt_trans-like"/>
</dbReference>
<dbReference type="InterPro" id="IPR006418">
    <property type="entry name" value="NMN_Atrans_arc"/>
</dbReference>
<dbReference type="InterPro" id="IPR014729">
    <property type="entry name" value="Rossmann-like_a/b/a_fold"/>
</dbReference>
<dbReference type="NCBIfam" id="TIGR01527">
    <property type="entry name" value="arch_NMN_Atrans"/>
    <property type="match status" value="1"/>
</dbReference>
<dbReference type="NCBIfam" id="TIGR00125">
    <property type="entry name" value="cyt_tran_rel"/>
    <property type="match status" value="1"/>
</dbReference>
<dbReference type="NCBIfam" id="NF002243">
    <property type="entry name" value="PRK01153.1"/>
    <property type="match status" value="1"/>
</dbReference>
<dbReference type="PANTHER" id="PTHR21342:SF0">
    <property type="entry name" value="BIFUNCTIONAL NMN ADENYLYLTRANSFERASE_NUDIX HYDROLASE"/>
    <property type="match status" value="1"/>
</dbReference>
<dbReference type="PANTHER" id="PTHR21342">
    <property type="entry name" value="PHOSPHOPANTETHEINE ADENYLYLTRANSFERASE"/>
    <property type="match status" value="1"/>
</dbReference>
<dbReference type="Pfam" id="PF01467">
    <property type="entry name" value="CTP_transf_like"/>
    <property type="match status" value="1"/>
</dbReference>
<dbReference type="SUPFAM" id="SSF52374">
    <property type="entry name" value="Nucleotidylyl transferase"/>
    <property type="match status" value="1"/>
</dbReference>
<name>NADM_THESM</name>
<evidence type="ECO:0000255" key="1">
    <source>
        <dbReference type="HAMAP-Rule" id="MF_00243"/>
    </source>
</evidence>
<protein>
    <recommendedName>
        <fullName evidence="1">Nicotinamide-nucleotide adenylyltransferase</fullName>
        <ecNumber evidence="1">2.7.7.1</ecNumber>
    </recommendedName>
    <alternativeName>
        <fullName evidence="1">NAD(+) diphosphorylase</fullName>
    </alternativeName>
    <alternativeName>
        <fullName evidence="1">NAD(+) pyrophosphorylase</fullName>
    </alternativeName>
    <alternativeName>
        <fullName evidence="1">NMN adenylyltransferase</fullName>
    </alternativeName>
</protein>
<organism>
    <name type="scientific">Thermococcus sibiricus (strain DSM 12597 / MM 739)</name>
    <dbReference type="NCBI Taxonomy" id="604354"/>
    <lineage>
        <taxon>Archaea</taxon>
        <taxon>Methanobacteriati</taxon>
        <taxon>Methanobacteriota</taxon>
        <taxon>Thermococci</taxon>
        <taxon>Thermococcales</taxon>
        <taxon>Thermococcaceae</taxon>
        <taxon>Thermococcus</taxon>
    </lineage>
</organism>